<proteinExistence type="inferred from homology"/>
<reference key="1">
    <citation type="submission" date="2007-12" db="EMBL/GenBank/DDBJ databases">
        <title>Complete sequence of chromosome of Francisella philomiragia subsp. philomiragia ATCC 25017.</title>
        <authorList>
            <consortium name="US DOE Joint Genome Institute"/>
            <person name="Copeland A."/>
            <person name="Lucas S."/>
            <person name="Lapidus A."/>
            <person name="Barry K."/>
            <person name="Detter J.C."/>
            <person name="Glavina del Rio T."/>
            <person name="Hammon N."/>
            <person name="Israni S."/>
            <person name="Dalin E."/>
            <person name="Tice H."/>
            <person name="Pitluck S."/>
            <person name="Chain P."/>
            <person name="Malfatti S."/>
            <person name="Shin M."/>
            <person name="Vergez L."/>
            <person name="Schmutz J."/>
            <person name="Larimer F."/>
            <person name="Land M."/>
            <person name="Hauser L."/>
            <person name="Richardson P."/>
        </authorList>
    </citation>
    <scope>NUCLEOTIDE SEQUENCE [LARGE SCALE GENOMIC DNA]</scope>
    <source>
        <strain>ATCC 25017 / CCUG 19701 / FSC 153 / O#319-036</strain>
    </source>
</reference>
<accession>B0TXQ5</accession>
<evidence type="ECO:0000250" key="1"/>
<evidence type="ECO:0000255" key="2">
    <source>
        <dbReference type="HAMAP-Rule" id="MF_01057"/>
    </source>
</evidence>
<comment type="function">
    <text evidence="2">Catalyzes the formation of N(7)-methylguanine at position 46 (m7G46) in tRNA.</text>
</comment>
<comment type="catalytic activity">
    <reaction evidence="2">
        <text>guanosine(46) in tRNA + S-adenosyl-L-methionine = N(7)-methylguanosine(46) in tRNA + S-adenosyl-L-homocysteine</text>
        <dbReference type="Rhea" id="RHEA:42708"/>
        <dbReference type="Rhea" id="RHEA-COMP:10188"/>
        <dbReference type="Rhea" id="RHEA-COMP:10189"/>
        <dbReference type="ChEBI" id="CHEBI:57856"/>
        <dbReference type="ChEBI" id="CHEBI:59789"/>
        <dbReference type="ChEBI" id="CHEBI:74269"/>
        <dbReference type="ChEBI" id="CHEBI:74480"/>
        <dbReference type="EC" id="2.1.1.33"/>
    </reaction>
</comment>
<comment type="pathway">
    <text evidence="2">tRNA modification; N(7)-methylguanine-tRNA biosynthesis.</text>
</comment>
<comment type="similarity">
    <text evidence="2">Belongs to the class I-like SAM-binding methyltransferase superfamily. TrmB family.</text>
</comment>
<feature type="chain" id="PRO_1000084442" description="tRNA (guanine-N(7)-)-methyltransferase">
    <location>
        <begin position="1"/>
        <end position="229"/>
    </location>
</feature>
<feature type="region of interest" description="Interaction with RNA" evidence="2">
    <location>
        <begin position="143"/>
        <end position="148"/>
    </location>
</feature>
<feature type="active site" evidence="1">
    <location>
        <position position="137"/>
    </location>
</feature>
<feature type="binding site" evidence="2">
    <location>
        <position position="62"/>
    </location>
    <ligand>
        <name>S-adenosyl-L-methionine</name>
        <dbReference type="ChEBI" id="CHEBI:59789"/>
    </ligand>
</feature>
<feature type="binding site" evidence="2">
    <location>
        <position position="87"/>
    </location>
    <ligand>
        <name>S-adenosyl-L-methionine</name>
        <dbReference type="ChEBI" id="CHEBI:59789"/>
    </ligand>
</feature>
<feature type="binding site" evidence="2">
    <location>
        <position position="114"/>
    </location>
    <ligand>
        <name>S-adenosyl-L-methionine</name>
        <dbReference type="ChEBI" id="CHEBI:59789"/>
    </ligand>
</feature>
<feature type="binding site" evidence="2">
    <location>
        <position position="137"/>
    </location>
    <ligand>
        <name>S-adenosyl-L-methionine</name>
        <dbReference type="ChEBI" id="CHEBI:59789"/>
    </ligand>
</feature>
<feature type="binding site" evidence="2">
    <location>
        <position position="141"/>
    </location>
    <ligand>
        <name>substrate</name>
    </ligand>
</feature>
<feature type="binding site" evidence="2">
    <location>
        <position position="173"/>
    </location>
    <ligand>
        <name>substrate</name>
    </ligand>
</feature>
<feature type="binding site" evidence="2">
    <location>
        <begin position="208"/>
        <end position="211"/>
    </location>
    <ligand>
        <name>substrate</name>
    </ligand>
</feature>
<organism>
    <name type="scientific">Francisella philomiragia subsp. philomiragia (strain ATCC 25017 / CCUG 19701 / FSC 153 / O#319-036)</name>
    <dbReference type="NCBI Taxonomy" id="484022"/>
    <lineage>
        <taxon>Bacteria</taxon>
        <taxon>Pseudomonadati</taxon>
        <taxon>Pseudomonadota</taxon>
        <taxon>Gammaproteobacteria</taxon>
        <taxon>Thiotrichales</taxon>
        <taxon>Francisellaceae</taxon>
        <taxon>Francisella</taxon>
    </lineage>
</organism>
<sequence>MSDNSKENLRQIKSYVQRAGRVTKKQQQALDDYASKYMIEYDQNKSLDFSEIFKNSNDVVLEIGFGMGGSLVQMALENPTKNYLGIEVHKAGVGNILYEIEHQNISNLLVMSHDAVEILENMISDNSLSGMQIYFPDPWHKKKHNKRRLVNQSNVDLFAKKLKVGGVFHYASDWLPYAEEVLELLENDNKYKNLYDGFAPRPEWRPLTKFEKRGQNLDHPISDILFEKI</sequence>
<dbReference type="EC" id="2.1.1.33" evidence="2"/>
<dbReference type="EMBL" id="CP000937">
    <property type="protein sequence ID" value="ABZ87513.1"/>
    <property type="molecule type" value="Genomic_DNA"/>
</dbReference>
<dbReference type="SMR" id="B0TXQ5"/>
<dbReference type="KEGG" id="fph:Fphi_1288"/>
<dbReference type="eggNOG" id="COG0220">
    <property type="taxonomic scope" value="Bacteria"/>
</dbReference>
<dbReference type="HOGENOM" id="CLU_050910_0_1_6"/>
<dbReference type="UniPathway" id="UPA00989"/>
<dbReference type="GO" id="GO:0043527">
    <property type="term" value="C:tRNA methyltransferase complex"/>
    <property type="evidence" value="ECO:0007669"/>
    <property type="project" value="TreeGrafter"/>
</dbReference>
<dbReference type="GO" id="GO:0008176">
    <property type="term" value="F:tRNA (guanine(46)-N7)-methyltransferase activity"/>
    <property type="evidence" value="ECO:0007669"/>
    <property type="project" value="UniProtKB-UniRule"/>
</dbReference>
<dbReference type="Gene3D" id="3.40.50.150">
    <property type="entry name" value="Vaccinia Virus protein VP39"/>
    <property type="match status" value="1"/>
</dbReference>
<dbReference type="HAMAP" id="MF_01057">
    <property type="entry name" value="tRNA_methyltr_TrmB"/>
    <property type="match status" value="1"/>
</dbReference>
<dbReference type="InterPro" id="IPR029063">
    <property type="entry name" value="SAM-dependent_MTases_sf"/>
</dbReference>
<dbReference type="InterPro" id="IPR003358">
    <property type="entry name" value="tRNA_(Gua-N-7)_MeTrfase_Trmb"/>
</dbReference>
<dbReference type="InterPro" id="IPR055361">
    <property type="entry name" value="tRNA_methyltr_TrmB_bact"/>
</dbReference>
<dbReference type="NCBIfam" id="TIGR00091">
    <property type="entry name" value="tRNA (guanosine(46)-N7)-methyltransferase TrmB"/>
    <property type="match status" value="1"/>
</dbReference>
<dbReference type="PANTHER" id="PTHR23417">
    <property type="entry name" value="3-DEOXY-D-MANNO-OCTULOSONIC-ACID TRANSFERASE/TRNA GUANINE-N 7 - -METHYLTRANSFERASE"/>
    <property type="match status" value="1"/>
</dbReference>
<dbReference type="PANTHER" id="PTHR23417:SF14">
    <property type="entry name" value="PENTACOTRIPEPTIDE-REPEAT REGION OF PRORP DOMAIN-CONTAINING PROTEIN"/>
    <property type="match status" value="1"/>
</dbReference>
<dbReference type="Pfam" id="PF02390">
    <property type="entry name" value="Methyltransf_4"/>
    <property type="match status" value="1"/>
</dbReference>
<dbReference type="SUPFAM" id="SSF53335">
    <property type="entry name" value="S-adenosyl-L-methionine-dependent methyltransferases"/>
    <property type="match status" value="1"/>
</dbReference>
<dbReference type="PROSITE" id="PS51625">
    <property type="entry name" value="SAM_MT_TRMB"/>
    <property type="match status" value="1"/>
</dbReference>
<keyword id="KW-0489">Methyltransferase</keyword>
<keyword id="KW-0949">S-adenosyl-L-methionine</keyword>
<keyword id="KW-0808">Transferase</keyword>
<keyword id="KW-0819">tRNA processing</keyword>
<protein>
    <recommendedName>
        <fullName evidence="2">tRNA (guanine-N(7)-)-methyltransferase</fullName>
        <ecNumber evidence="2">2.1.1.33</ecNumber>
    </recommendedName>
    <alternativeName>
        <fullName evidence="2">tRNA (guanine(46)-N(7))-methyltransferase</fullName>
    </alternativeName>
    <alternativeName>
        <fullName evidence="2">tRNA(m7G46)-methyltransferase</fullName>
    </alternativeName>
</protein>
<gene>
    <name evidence="2" type="primary">trmB</name>
    <name type="ordered locus">Fphi_1288</name>
</gene>
<name>TRMB_FRAP2</name>